<keyword id="KW-0028">Amino-acid biosynthesis</keyword>
<keyword id="KW-0963">Cytoplasm</keyword>
<keyword id="KW-0378">Hydrolase</keyword>
<keyword id="KW-0460">Magnesium</keyword>
<keyword id="KW-0479">Metal-binding</keyword>
<keyword id="KW-0486">Methionine biosynthesis</keyword>
<keyword id="KW-0539">Nucleus</keyword>
<keyword id="KW-1185">Reference proteome</keyword>
<accession>A3LRM2</accession>
<evidence type="ECO:0000255" key="1">
    <source>
        <dbReference type="HAMAP-Rule" id="MF_03117"/>
    </source>
</evidence>
<feature type="chain" id="PRO_0000394008" description="Enolase-phosphatase E1">
    <location>
        <begin position="1"/>
        <end position="241"/>
    </location>
</feature>
<feature type="binding site" evidence="1">
    <location>
        <position position="9"/>
    </location>
    <ligand>
        <name>Mg(2+)</name>
        <dbReference type="ChEBI" id="CHEBI:18420"/>
    </ligand>
</feature>
<feature type="binding site" evidence="1">
    <location>
        <position position="11"/>
    </location>
    <ligand>
        <name>Mg(2+)</name>
        <dbReference type="ChEBI" id="CHEBI:18420"/>
    </ligand>
</feature>
<feature type="binding site" evidence="1">
    <location>
        <begin position="133"/>
        <end position="134"/>
    </location>
    <ligand>
        <name>substrate</name>
    </ligand>
</feature>
<feature type="binding site" evidence="1">
    <location>
        <position position="172"/>
    </location>
    <ligand>
        <name>substrate</name>
    </ligand>
</feature>
<feature type="binding site" evidence="1">
    <location>
        <position position="198"/>
    </location>
    <ligand>
        <name>Mg(2+)</name>
        <dbReference type="ChEBI" id="CHEBI:18420"/>
    </ligand>
</feature>
<protein>
    <recommendedName>
        <fullName evidence="1">Enolase-phosphatase E1</fullName>
        <ecNumber evidence="1">3.1.3.77</ecNumber>
    </recommendedName>
    <alternativeName>
        <fullName evidence="1">2,3-diketo-5-methylthio-1-phosphopentane phosphatase</fullName>
    </alternativeName>
</protein>
<name>ENOPH_PICST</name>
<comment type="function">
    <text evidence="1">Bifunctional enzyme that catalyzes the enolization of 2,3-diketo-5-methylthiopentyl-1-phosphate (DK-MTP-1-P) into the intermediate 2-hydroxy-3-keto-5-methylthiopentenyl-1-phosphate (HK-MTPenyl-1-P), which is then dephosphorylated to form the acireductone 1,2-dihydroxy-3-keto-5-methylthiopentene (DHK-MTPene).</text>
</comment>
<comment type="catalytic activity">
    <reaction evidence="1">
        <text>5-methylsulfanyl-2,3-dioxopentyl phosphate + H2O = 1,2-dihydroxy-5-(methylsulfanyl)pent-1-en-3-one + phosphate</text>
        <dbReference type="Rhea" id="RHEA:21700"/>
        <dbReference type="ChEBI" id="CHEBI:15377"/>
        <dbReference type="ChEBI" id="CHEBI:43474"/>
        <dbReference type="ChEBI" id="CHEBI:49252"/>
        <dbReference type="ChEBI" id="CHEBI:58828"/>
        <dbReference type="EC" id="3.1.3.77"/>
    </reaction>
</comment>
<comment type="cofactor">
    <cofactor evidence="1">
        <name>Mg(2+)</name>
        <dbReference type="ChEBI" id="CHEBI:18420"/>
    </cofactor>
    <text evidence="1">Binds 1 Mg(2+) ion per subunit.</text>
</comment>
<comment type="pathway">
    <text evidence="1">Amino-acid biosynthesis; L-methionine biosynthesis via salvage pathway; L-methionine from S-methyl-5-thio-alpha-D-ribose 1-phosphate: step 3/6.</text>
</comment>
<comment type="pathway">
    <text evidence="1">Amino-acid biosynthesis; L-methionine biosynthesis via salvage pathway; L-methionine from S-methyl-5-thio-alpha-D-ribose 1-phosphate: step 4/6.</text>
</comment>
<comment type="subunit">
    <text evidence="1">Monomer.</text>
</comment>
<comment type="subcellular location">
    <subcellularLocation>
        <location evidence="1">Cytoplasm</location>
    </subcellularLocation>
    <subcellularLocation>
        <location evidence="1">Nucleus</location>
    </subcellularLocation>
</comment>
<comment type="similarity">
    <text evidence="1">Belongs to the HAD-like hydrolase superfamily. MasA/MtnC family.</text>
</comment>
<gene>
    <name evidence="1" type="primary">UTR4</name>
    <name type="ORF">PICST_44113</name>
</gene>
<proteinExistence type="inferred from homology"/>
<sequence length="241" mass="27173">MAIDTVVLDIEGTVCPITFVKEKLFPYFLEKLPSFLSEISNFTSLQADDKDPIKAILSQLPEQIRTSKDSVLEYFNDLVRRDIKDPILKQLQGFIWKLGYENGDLKAPVYEDSIEFIKTFPSKTENKRIYIYSSGSIKAQILLFGYVDENGKSVDLNEYLSGYFDITTAGFKTQSSSYTKILEDIGKEHGGSVLFLSDNVLEVEAALEAGMESYVVVRPGNAPLTEDDKTKYKIITSLEQL</sequence>
<dbReference type="EC" id="3.1.3.77" evidence="1"/>
<dbReference type="EMBL" id="CP000497">
    <property type="protein sequence ID" value="ABN65409.2"/>
    <property type="molecule type" value="Genomic_DNA"/>
</dbReference>
<dbReference type="RefSeq" id="XP_001383438.2">
    <property type="nucleotide sequence ID" value="XM_001383401.1"/>
</dbReference>
<dbReference type="SMR" id="A3LRM2"/>
<dbReference type="FunCoup" id="A3LRM2">
    <property type="interactions" value="659"/>
</dbReference>
<dbReference type="STRING" id="322104.A3LRM2"/>
<dbReference type="GeneID" id="4838040"/>
<dbReference type="KEGG" id="pic:PICST_44113"/>
<dbReference type="eggNOG" id="KOG2630">
    <property type="taxonomic scope" value="Eukaryota"/>
</dbReference>
<dbReference type="HOGENOM" id="CLU_023273_1_1_1"/>
<dbReference type="InParanoid" id="A3LRM2"/>
<dbReference type="OMA" id="LQGMVWE"/>
<dbReference type="OrthoDB" id="272500at2759"/>
<dbReference type="UniPathway" id="UPA00904">
    <property type="reaction ID" value="UER00876"/>
</dbReference>
<dbReference type="UniPathway" id="UPA00904">
    <property type="reaction ID" value="UER00877"/>
</dbReference>
<dbReference type="Proteomes" id="UP000002258">
    <property type="component" value="Chromosome 3"/>
</dbReference>
<dbReference type="GO" id="GO:0005737">
    <property type="term" value="C:cytoplasm"/>
    <property type="evidence" value="ECO:0007669"/>
    <property type="project" value="UniProtKB-SubCell"/>
</dbReference>
<dbReference type="GO" id="GO:0005634">
    <property type="term" value="C:nucleus"/>
    <property type="evidence" value="ECO:0007669"/>
    <property type="project" value="UniProtKB-SubCell"/>
</dbReference>
<dbReference type="GO" id="GO:0043874">
    <property type="term" value="F:acireductone synthase activity"/>
    <property type="evidence" value="ECO:0007669"/>
    <property type="project" value="UniProtKB-EC"/>
</dbReference>
<dbReference type="GO" id="GO:0000287">
    <property type="term" value="F:magnesium ion binding"/>
    <property type="evidence" value="ECO:0007669"/>
    <property type="project" value="UniProtKB-UniRule"/>
</dbReference>
<dbReference type="GO" id="GO:0019509">
    <property type="term" value="P:L-methionine salvage from methylthioadenosine"/>
    <property type="evidence" value="ECO:0007669"/>
    <property type="project" value="UniProtKB-UniRule"/>
</dbReference>
<dbReference type="CDD" id="cd01629">
    <property type="entry name" value="HAD_EP"/>
    <property type="match status" value="1"/>
</dbReference>
<dbReference type="Gene3D" id="1.10.720.60">
    <property type="match status" value="1"/>
</dbReference>
<dbReference type="Gene3D" id="3.40.50.1000">
    <property type="entry name" value="HAD superfamily/HAD-like"/>
    <property type="match status" value="1"/>
</dbReference>
<dbReference type="HAMAP" id="MF_03117">
    <property type="entry name" value="Salvage_MtnC_euk"/>
    <property type="match status" value="1"/>
</dbReference>
<dbReference type="InterPro" id="IPR023943">
    <property type="entry name" value="Enolase-ppase_E1"/>
</dbReference>
<dbReference type="InterPro" id="IPR027511">
    <property type="entry name" value="ENOPH1_eukaryotes"/>
</dbReference>
<dbReference type="InterPro" id="IPR036412">
    <property type="entry name" value="HAD-like_sf"/>
</dbReference>
<dbReference type="InterPro" id="IPR023214">
    <property type="entry name" value="HAD_sf"/>
</dbReference>
<dbReference type="NCBIfam" id="TIGR01691">
    <property type="entry name" value="enolase-ppase"/>
    <property type="match status" value="1"/>
</dbReference>
<dbReference type="PANTHER" id="PTHR20371">
    <property type="entry name" value="ENOLASE-PHOSPHATASE E1"/>
    <property type="match status" value="1"/>
</dbReference>
<dbReference type="PANTHER" id="PTHR20371:SF1">
    <property type="entry name" value="ENOLASE-PHOSPHATASE E1"/>
    <property type="match status" value="1"/>
</dbReference>
<dbReference type="Pfam" id="PF00702">
    <property type="entry name" value="Hydrolase"/>
    <property type="match status" value="1"/>
</dbReference>
<dbReference type="SFLD" id="SFLDG01133">
    <property type="entry name" value="C1.5.4:_Enolase-phosphatase_Li"/>
    <property type="match status" value="1"/>
</dbReference>
<dbReference type="SFLD" id="SFLDG01129">
    <property type="entry name" value="C1.5:_HAD__Beta-PGM__Phosphata"/>
    <property type="match status" value="1"/>
</dbReference>
<dbReference type="SUPFAM" id="SSF56784">
    <property type="entry name" value="HAD-like"/>
    <property type="match status" value="1"/>
</dbReference>
<reference key="1">
    <citation type="journal article" date="2007" name="Nat. Biotechnol.">
        <title>Genome sequence of the lignocellulose-bioconverting and xylose-fermenting yeast Pichia stipitis.</title>
        <authorList>
            <person name="Jeffries T.W."/>
            <person name="Grigoriev I.V."/>
            <person name="Grimwood J."/>
            <person name="Laplaza J.M."/>
            <person name="Aerts A."/>
            <person name="Salamov A."/>
            <person name="Schmutz J."/>
            <person name="Lindquist E."/>
            <person name="Dehal P."/>
            <person name="Shapiro H."/>
            <person name="Jin Y.-S."/>
            <person name="Passoth V."/>
            <person name="Richardson P.M."/>
        </authorList>
    </citation>
    <scope>NUCLEOTIDE SEQUENCE [LARGE SCALE GENOMIC DNA]</scope>
    <source>
        <strain>ATCC 58785 / CBS 6054 / NBRC 10063 / NRRL Y-11545</strain>
    </source>
</reference>
<organism>
    <name type="scientific">Scheffersomyces stipitis (strain ATCC 58785 / CBS 6054 / NBRC 10063 / NRRL Y-11545)</name>
    <name type="common">Yeast</name>
    <name type="synonym">Pichia stipitis</name>
    <dbReference type="NCBI Taxonomy" id="322104"/>
    <lineage>
        <taxon>Eukaryota</taxon>
        <taxon>Fungi</taxon>
        <taxon>Dikarya</taxon>
        <taxon>Ascomycota</taxon>
        <taxon>Saccharomycotina</taxon>
        <taxon>Pichiomycetes</taxon>
        <taxon>Debaryomycetaceae</taxon>
        <taxon>Scheffersomyces</taxon>
    </lineage>
</organism>